<name>BLML1_DICDI</name>
<organism>
    <name type="scientific">Dictyostelium discoideum</name>
    <name type="common">Social amoeba</name>
    <dbReference type="NCBI Taxonomy" id="44689"/>
    <lineage>
        <taxon>Eukaryota</taxon>
        <taxon>Amoebozoa</taxon>
        <taxon>Evosea</taxon>
        <taxon>Eumycetozoa</taxon>
        <taxon>Dictyostelia</taxon>
        <taxon>Dictyosteliales</taxon>
        <taxon>Dictyosteliaceae</taxon>
        <taxon>Dictyostelium</taxon>
    </lineage>
</organism>
<reference key="1">
    <citation type="journal article" date="2002" name="Nature">
        <title>Sequence and analysis of chromosome 2 of Dictyostelium discoideum.</title>
        <authorList>
            <person name="Gloeckner G."/>
            <person name="Eichinger L."/>
            <person name="Szafranski K."/>
            <person name="Pachebat J.A."/>
            <person name="Bankier A.T."/>
            <person name="Dear P.H."/>
            <person name="Lehmann R."/>
            <person name="Baumgart C."/>
            <person name="Parra G."/>
            <person name="Abril J.F."/>
            <person name="Guigo R."/>
            <person name="Kumpf K."/>
            <person name="Tunggal B."/>
            <person name="Cox E.C."/>
            <person name="Quail M.A."/>
            <person name="Platzer M."/>
            <person name="Rosenthal A."/>
            <person name="Noegel A.A."/>
        </authorList>
    </citation>
    <scope>NUCLEOTIDE SEQUENCE [LARGE SCALE GENOMIC DNA]</scope>
    <source>
        <strain>AX4</strain>
    </source>
</reference>
<reference key="2">
    <citation type="journal article" date="2005" name="Nature">
        <title>The genome of the social amoeba Dictyostelium discoideum.</title>
        <authorList>
            <person name="Eichinger L."/>
            <person name="Pachebat J.A."/>
            <person name="Gloeckner G."/>
            <person name="Rajandream M.A."/>
            <person name="Sucgang R."/>
            <person name="Berriman M."/>
            <person name="Song J."/>
            <person name="Olsen R."/>
            <person name="Szafranski K."/>
            <person name="Xu Q."/>
            <person name="Tunggal B."/>
            <person name="Kummerfeld S."/>
            <person name="Madera M."/>
            <person name="Konfortov B.A."/>
            <person name="Rivero F."/>
            <person name="Bankier A.T."/>
            <person name="Lehmann R."/>
            <person name="Hamlin N."/>
            <person name="Davies R."/>
            <person name="Gaudet P."/>
            <person name="Fey P."/>
            <person name="Pilcher K."/>
            <person name="Chen G."/>
            <person name="Saunders D."/>
            <person name="Sodergren E.J."/>
            <person name="Davis P."/>
            <person name="Kerhornou A."/>
            <person name="Nie X."/>
            <person name="Hall N."/>
            <person name="Anjard C."/>
            <person name="Hemphill L."/>
            <person name="Bason N."/>
            <person name="Farbrother P."/>
            <person name="Desany B."/>
            <person name="Just E."/>
            <person name="Morio T."/>
            <person name="Rost R."/>
            <person name="Churcher C.M."/>
            <person name="Cooper J."/>
            <person name="Haydock S."/>
            <person name="van Driessche N."/>
            <person name="Cronin A."/>
            <person name="Goodhead I."/>
            <person name="Muzny D.M."/>
            <person name="Mourier T."/>
            <person name="Pain A."/>
            <person name="Lu M."/>
            <person name="Harper D."/>
            <person name="Lindsay R."/>
            <person name="Hauser H."/>
            <person name="James K.D."/>
            <person name="Quiles M."/>
            <person name="Madan Babu M."/>
            <person name="Saito T."/>
            <person name="Buchrieser C."/>
            <person name="Wardroper A."/>
            <person name="Felder M."/>
            <person name="Thangavelu M."/>
            <person name="Johnson D."/>
            <person name="Knights A."/>
            <person name="Loulseged H."/>
            <person name="Mungall K.L."/>
            <person name="Oliver K."/>
            <person name="Price C."/>
            <person name="Quail M.A."/>
            <person name="Urushihara H."/>
            <person name="Hernandez J."/>
            <person name="Rabbinowitsch E."/>
            <person name="Steffen D."/>
            <person name="Sanders M."/>
            <person name="Ma J."/>
            <person name="Kohara Y."/>
            <person name="Sharp S."/>
            <person name="Simmonds M.N."/>
            <person name="Spiegler S."/>
            <person name="Tivey A."/>
            <person name="Sugano S."/>
            <person name="White B."/>
            <person name="Walker D."/>
            <person name="Woodward J.R."/>
            <person name="Winckler T."/>
            <person name="Tanaka Y."/>
            <person name="Shaulsky G."/>
            <person name="Schleicher M."/>
            <person name="Weinstock G.M."/>
            <person name="Rosenthal A."/>
            <person name="Cox E.C."/>
            <person name="Chisholm R.L."/>
            <person name="Gibbs R.A."/>
            <person name="Loomis W.F."/>
            <person name="Platzer M."/>
            <person name="Kay R.R."/>
            <person name="Williams J.G."/>
            <person name="Dear P.H."/>
            <person name="Noegel A.A."/>
            <person name="Barrell B.G."/>
            <person name="Kuspa A."/>
        </authorList>
    </citation>
    <scope>NUCLEOTIDE SEQUENCE [LARGE SCALE GENOMIC DNA]</scope>
    <source>
        <strain>AX4</strain>
    </source>
</reference>
<evidence type="ECO:0000255" key="1"/>
<evidence type="ECO:0000256" key="2">
    <source>
        <dbReference type="SAM" id="MobiDB-lite"/>
    </source>
</evidence>
<evidence type="ECO:0000305" key="3"/>
<feature type="signal peptide" evidence="1">
    <location>
        <begin position="1"/>
        <end position="28"/>
    </location>
</feature>
<feature type="chain" id="PRO_0000343693" description="Beta-lactamase-like protein 1">
    <location>
        <begin position="29"/>
        <end position="628"/>
    </location>
</feature>
<feature type="region of interest" description="Disordered" evidence="2">
    <location>
        <begin position="245"/>
        <end position="285"/>
    </location>
</feature>
<feature type="region of interest" description="Disordered" evidence="2">
    <location>
        <begin position="494"/>
        <end position="516"/>
    </location>
</feature>
<feature type="compositionally biased region" description="Low complexity" evidence="2">
    <location>
        <begin position="245"/>
        <end position="281"/>
    </location>
</feature>
<feature type="compositionally biased region" description="Acidic residues" evidence="2">
    <location>
        <begin position="496"/>
        <end position="506"/>
    </location>
</feature>
<feature type="compositionally biased region" description="Low complexity" evidence="2">
    <location>
        <begin position="507"/>
        <end position="516"/>
    </location>
</feature>
<feature type="glycosylation site" description="N-linked (GlcNAc...) asparagine" evidence="1">
    <location>
        <position position="45"/>
    </location>
</feature>
<feature type="glycosylation site" description="N-linked (GlcNAc...) asparagine" evidence="1">
    <location>
        <position position="68"/>
    </location>
</feature>
<feature type="glycosylation site" description="N-linked (GlcNAc...) asparagine" evidence="1">
    <location>
        <position position="198"/>
    </location>
</feature>
<feature type="glycosylation site" description="N-linked (GlcNAc...) asparagine" evidence="1">
    <location>
        <position position="241"/>
    </location>
</feature>
<feature type="glycosylation site" description="N-linked (GlcNAc...) asparagine" evidence="1">
    <location>
        <position position="313"/>
    </location>
</feature>
<feature type="glycosylation site" description="N-linked (GlcNAc...) asparagine" evidence="1">
    <location>
        <position position="335"/>
    </location>
</feature>
<gene>
    <name type="ORF">DDB_G0276787</name>
</gene>
<sequence>MKNILSFSFSFSFLYILFLLLFLNNNLLIIKSCPTYPNPIKLNQNESLLIEAYNQIDELIQNNMKLNNVTSFIATIVYMDEIVWSKTYGNLNPLDDKSPPLTIDNNIKIASLTKVFTSLMMYQLRDNGKILSLDDKISNYFPKFKINDIYKLKSSGSGSKSGKSDIKDNSITFRQLASHQSGLPREVPCDSITYGTKNCTENIIFERLSKQFTLLKQYSEVHYSNLGFALLGKILGEIISNSTNNNNNNNNNNNNNNNNNNNNNNNNNNNNNNNNNNNNNNKIKTNDLISSNEQFQYENYILNNILKPLNMMNSTFNYDDIDSNNLALGYTILKNGTFEIVQRQNSGWNSPAGGLYSTARDISKFMIFWLNNGIISNNNNKNDNNNNNNENNDNLVKESTINEALLPVSLISDGLTAYGTPFEMWYDQQNNIWLKSKAGIANAYRTQMALIPPLKLGMFFSSQFVFDTPDLFTREVSQILIPVYEYLLNKKQEEKEEKEEEEENQQDESQQQQQQQQNNIKLLSNDIFIGNYLNEFGSIFNVFIDDSTGLLYCNFGNDFVYLISDFDDSYNFPHIKRISLLDPKKYICWPIVDGANEELIYFTFNDDDSRNSITCTGVQVLGQFLYKT</sequence>
<protein>
    <recommendedName>
        <fullName>Beta-lactamase-like protein 1</fullName>
    </recommendedName>
</protein>
<comment type="subcellular location">
    <subcellularLocation>
        <location evidence="3">Secreted</location>
    </subcellularLocation>
</comment>
<comment type="similarity">
    <text evidence="3">Belongs to the beta-lactamase family.</text>
</comment>
<dbReference type="EMBL" id="AAFI02000019">
    <property type="protein sequence ID" value="EAL68895.1"/>
    <property type="molecule type" value="Genomic_DNA"/>
</dbReference>
<dbReference type="RefSeq" id="XP_642873.1">
    <property type="nucleotide sequence ID" value="XM_637781.1"/>
</dbReference>
<dbReference type="SMR" id="Q7KWX1"/>
<dbReference type="FunCoup" id="Q7KWX1">
    <property type="interactions" value="3"/>
</dbReference>
<dbReference type="STRING" id="44689.Q7KWX1"/>
<dbReference type="MEROPS" id="S12.A24"/>
<dbReference type="GlyGen" id="Q7KWX1">
    <property type="glycosylation" value="6 sites"/>
</dbReference>
<dbReference type="PaxDb" id="44689-DDB0168304"/>
<dbReference type="EnsemblProtists" id="EAL68895">
    <property type="protein sequence ID" value="EAL68895"/>
    <property type="gene ID" value="DDB_G0276787"/>
</dbReference>
<dbReference type="GeneID" id="8620739"/>
<dbReference type="KEGG" id="ddi:DDB_G0276787"/>
<dbReference type="dictyBase" id="DDB_G0276787"/>
<dbReference type="VEuPathDB" id="AmoebaDB:DDB_G0276787"/>
<dbReference type="eggNOG" id="ENOG502RSQW">
    <property type="taxonomic scope" value="Eukaryota"/>
</dbReference>
<dbReference type="HOGENOM" id="CLU_472095_0_0_1"/>
<dbReference type="InParanoid" id="Q7KWX1"/>
<dbReference type="OMA" id="MMYQLRD"/>
<dbReference type="PhylomeDB" id="Q7KWX1"/>
<dbReference type="PRO" id="PR:Q7KWX1"/>
<dbReference type="Proteomes" id="UP000002195">
    <property type="component" value="Chromosome 2"/>
</dbReference>
<dbReference type="GO" id="GO:0005576">
    <property type="term" value="C:extracellular region"/>
    <property type="evidence" value="ECO:0007669"/>
    <property type="project" value="UniProtKB-SubCell"/>
</dbReference>
<dbReference type="Gene3D" id="3.40.710.10">
    <property type="entry name" value="DD-peptidase/beta-lactamase superfamily"/>
    <property type="match status" value="2"/>
</dbReference>
<dbReference type="InterPro" id="IPR001466">
    <property type="entry name" value="Beta-lactam-related"/>
</dbReference>
<dbReference type="InterPro" id="IPR012338">
    <property type="entry name" value="Beta-lactam/transpept-like"/>
</dbReference>
<dbReference type="InterPro" id="IPR051478">
    <property type="entry name" value="Beta-lactamase-like_AB/R"/>
</dbReference>
<dbReference type="PANTHER" id="PTHR22935:SF95">
    <property type="entry name" value="BETA-LACTAMASE-LIKE 1-RELATED"/>
    <property type="match status" value="1"/>
</dbReference>
<dbReference type="PANTHER" id="PTHR22935">
    <property type="entry name" value="PENICILLIN-BINDING PROTEIN"/>
    <property type="match status" value="1"/>
</dbReference>
<dbReference type="Pfam" id="PF00144">
    <property type="entry name" value="Beta-lactamase"/>
    <property type="match status" value="2"/>
</dbReference>
<dbReference type="SUPFAM" id="SSF56601">
    <property type="entry name" value="beta-lactamase/transpeptidase-like"/>
    <property type="match status" value="1"/>
</dbReference>
<keyword id="KW-0325">Glycoprotein</keyword>
<keyword id="KW-1185">Reference proteome</keyword>
<keyword id="KW-0964">Secreted</keyword>
<keyword id="KW-0732">Signal</keyword>
<accession>Q7KWX1</accession>
<accession>Q550Q9</accession>
<proteinExistence type="inferred from homology"/>